<evidence type="ECO:0000255" key="1">
    <source>
        <dbReference type="HAMAP-Rule" id="MF_00151"/>
    </source>
</evidence>
<sequence>MTSIAISSGSFDPITLGHLDIIKRGAKVFDEVYVVVLNNSSKKPFFSVEERLELIREATKDIPNVKVDSHSGLLVEYAKMRNANAILRGLRAVSDFEYEMQITSMNRKLDENIETFFIMTNNQYSFLSSSIVKEVARYGGSVVDLVPPIVERALKEKFQTPLK</sequence>
<dbReference type="EC" id="2.7.7.3" evidence="1"/>
<dbReference type="EMBL" id="AE016877">
    <property type="protein sequence ID" value="AAP10849.1"/>
    <property type="molecule type" value="Genomic_DNA"/>
</dbReference>
<dbReference type="RefSeq" id="NP_833648.1">
    <property type="nucleotide sequence ID" value="NC_004722.1"/>
</dbReference>
<dbReference type="RefSeq" id="WP_000200601.1">
    <property type="nucleotide sequence ID" value="NZ_CP138336.1"/>
</dbReference>
<dbReference type="SMR" id="Q819P1"/>
<dbReference type="STRING" id="226900.BC_3929"/>
<dbReference type="GeneID" id="92883649"/>
<dbReference type="KEGG" id="bce:BC3929"/>
<dbReference type="PATRIC" id="fig|226900.8.peg.4053"/>
<dbReference type="HOGENOM" id="CLU_100149_0_1_9"/>
<dbReference type="OrthoDB" id="9806661at2"/>
<dbReference type="UniPathway" id="UPA00241">
    <property type="reaction ID" value="UER00355"/>
</dbReference>
<dbReference type="Proteomes" id="UP000001417">
    <property type="component" value="Chromosome"/>
</dbReference>
<dbReference type="GO" id="GO:0005737">
    <property type="term" value="C:cytoplasm"/>
    <property type="evidence" value="ECO:0007669"/>
    <property type="project" value="UniProtKB-SubCell"/>
</dbReference>
<dbReference type="GO" id="GO:0005524">
    <property type="term" value="F:ATP binding"/>
    <property type="evidence" value="ECO:0007669"/>
    <property type="project" value="UniProtKB-KW"/>
</dbReference>
<dbReference type="GO" id="GO:0004595">
    <property type="term" value="F:pantetheine-phosphate adenylyltransferase activity"/>
    <property type="evidence" value="ECO:0000318"/>
    <property type="project" value="GO_Central"/>
</dbReference>
<dbReference type="GO" id="GO:0015937">
    <property type="term" value="P:coenzyme A biosynthetic process"/>
    <property type="evidence" value="ECO:0000318"/>
    <property type="project" value="GO_Central"/>
</dbReference>
<dbReference type="CDD" id="cd02163">
    <property type="entry name" value="PPAT"/>
    <property type="match status" value="1"/>
</dbReference>
<dbReference type="FunFam" id="3.40.50.620:FF:000012">
    <property type="entry name" value="Phosphopantetheine adenylyltransferase"/>
    <property type="match status" value="1"/>
</dbReference>
<dbReference type="Gene3D" id="3.40.50.620">
    <property type="entry name" value="HUPs"/>
    <property type="match status" value="1"/>
</dbReference>
<dbReference type="HAMAP" id="MF_00151">
    <property type="entry name" value="PPAT_bact"/>
    <property type="match status" value="1"/>
</dbReference>
<dbReference type="InterPro" id="IPR004821">
    <property type="entry name" value="Cyt_trans-like"/>
</dbReference>
<dbReference type="InterPro" id="IPR001980">
    <property type="entry name" value="PPAT"/>
</dbReference>
<dbReference type="InterPro" id="IPR014729">
    <property type="entry name" value="Rossmann-like_a/b/a_fold"/>
</dbReference>
<dbReference type="NCBIfam" id="TIGR01510">
    <property type="entry name" value="coaD_prev_kdtB"/>
    <property type="match status" value="1"/>
</dbReference>
<dbReference type="NCBIfam" id="TIGR00125">
    <property type="entry name" value="cyt_tran_rel"/>
    <property type="match status" value="1"/>
</dbReference>
<dbReference type="PANTHER" id="PTHR21342">
    <property type="entry name" value="PHOSPHOPANTETHEINE ADENYLYLTRANSFERASE"/>
    <property type="match status" value="1"/>
</dbReference>
<dbReference type="PANTHER" id="PTHR21342:SF1">
    <property type="entry name" value="PHOSPHOPANTETHEINE ADENYLYLTRANSFERASE"/>
    <property type="match status" value="1"/>
</dbReference>
<dbReference type="Pfam" id="PF01467">
    <property type="entry name" value="CTP_transf_like"/>
    <property type="match status" value="1"/>
</dbReference>
<dbReference type="PRINTS" id="PR01020">
    <property type="entry name" value="LPSBIOSNTHSS"/>
</dbReference>
<dbReference type="SUPFAM" id="SSF52374">
    <property type="entry name" value="Nucleotidylyl transferase"/>
    <property type="match status" value="1"/>
</dbReference>
<keyword id="KW-0067">ATP-binding</keyword>
<keyword id="KW-0173">Coenzyme A biosynthesis</keyword>
<keyword id="KW-0963">Cytoplasm</keyword>
<keyword id="KW-0460">Magnesium</keyword>
<keyword id="KW-0547">Nucleotide-binding</keyword>
<keyword id="KW-0548">Nucleotidyltransferase</keyword>
<keyword id="KW-1185">Reference proteome</keyword>
<keyword id="KW-0808">Transferase</keyword>
<accession>Q819P1</accession>
<name>COAD_BACCR</name>
<comment type="function">
    <text evidence="1">Reversibly transfers an adenylyl group from ATP to 4'-phosphopantetheine, yielding dephospho-CoA (dPCoA) and pyrophosphate.</text>
</comment>
<comment type="catalytic activity">
    <reaction evidence="1">
        <text>(R)-4'-phosphopantetheine + ATP + H(+) = 3'-dephospho-CoA + diphosphate</text>
        <dbReference type="Rhea" id="RHEA:19801"/>
        <dbReference type="ChEBI" id="CHEBI:15378"/>
        <dbReference type="ChEBI" id="CHEBI:30616"/>
        <dbReference type="ChEBI" id="CHEBI:33019"/>
        <dbReference type="ChEBI" id="CHEBI:57328"/>
        <dbReference type="ChEBI" id="CHEBI:61723"/>
        <dbReference type="EC" id="2.7.7.3"/>
    </reaction>
</comment>
<comment type="cofactor">
    <cofactor evidence="1">
        <name>Mg(2+)</name>
        <dbReference type="ChEBI" id="CHEBI:18420"/>
    </cofactor>
</comment>
<comment type="pathway">
    <text evidence="1">Cofactor biosynthesis; coenzyme A biosynthesis; CoA from (R)-pantothenate: step 4/5.</text>
</comment>
<comment type="subunit">
    <text evidence="1">Homohexamer.</text>
</comment>
<comment type="subcellular location">
    <subcellularLocation>
        <location evidence="1">Cytoplasm</location>
    </subcellularLocation>
</comment>
<comment type="similarity">
    <text evidence="1">Belongs to the bacterial CoaD family.</text>
</comment>
<gene>
    <name evidence="1" type="primary">coaD</name>
    <name type="ordered locus">BC_3929</name>
</gene>
<feature type="chain" id="PRO_0000156163" description="Phosphopantetheine adenylyltransferase">
    <location>
        <begin position="1"/>
        <end position="163"/>
    </location>
</feature>
<feature type="binding site" evidence="1">
    <location>
        <begin position="10"/>
        <end position="11"/>
    </location>
    <ligand>
        <name>ATP</name>
        <dbReference type="ChEBI" id="CHEBI:30616"/>
    </ligand>
</feature>
<feature type="binding site" evidence="1">
    <location>
        <position position="10"/>
    </location>
    <ligand>
        <name>substrate</name>
    </ligand>
</feature>
<feature type="binding site" evidence="1">
    <location>
        <position position="18"/>
    </location>
    <ligand>
        <name>ATP</name>
        <dbReference type="ChEBI" id="CHEBI:30616"/>
    </ligand>
</feature>
<feature type="binding site" evidence="1">
    <location>
        <position position="42"/>
    </location>
    <ligand>
        <name>substrate</name>
    </ligand>
</feature>
<feature type="binding site" evidence="1">
    <location>
        <position position="74"/>
    </location>
    <ligand>
        <name>substrate</name>
    </ligand>
</feature>
<feature type="binding site" evidence="1">
    <location>
        <position position="88"/>
    </location>
    <ligand>
        <name>substrate</name>
    </ligand>
</feature>
<feature type="binding site" evidence="1">
    <location>
        <begin position="89"/>
        <end position="91"/>
    </location>
    <ligand>
        <name>ATP</name>
        <dbReference type="ChEBI" id="CHEBI:30616"/>
    </ligand>
</feature>
<feature type="binding site" evidence="1">
    <location>
        <position position="99"/>
    </location>
    <ligand>
        <name>ATP</name>
        <dbReference type="ChEBI" id="CHEBI:30616"/>
    </ligand>
</feature>
<feature type="binding site" evidence="1">
    <location>
        <begin position="124"/>
        <end position="130"/>
    </location>
    <ligand>
        <name>ATP</name>
        <dbReference type="ChEBI" id="CHEBI:30616"/>
    </ligand>
</feature>
<feature type="site" description="Transition state stabilizer" evidence="1">
    <location>
        <position position="18"/>
    </location>
</feature>
<organism>
    <name type="scientific">Bacillus cereus (strain ATCC 14579 / DSM 31 / CCUG 7414 / JCM 2152 / NBRC 15305 / NCIMB 9373 / NCTC 2599 / NRRL B-3711)</name>
    <dbReference type="NCBI Taxonomy" id="226900"/>
    <lineage>
        <taxon>Bacteria</taxon>
        <taxon>Bacillati</taxon>
        <taxon>Bacillota</taxon>
        <taxon>Bacilli</taxon>
        <taxon>Bacillales</taxon>
        <taxon>Bacillaceae</taxon>
        <taxon>Bacillus</taxon>
        <taxon>Bacillus cereus group</taxon>
    </lineage>
</organism>
<protein>
    <recommendedName>
        <fullName evidence="1">Phosphopantetheine adenylyltransferase</fullName>
        <ecNumber evidence="1">2.7.7.3</ecNumber>
    </recommendedName>
    <alternativeName>
        <fullName evidence="1">Dephospho-CoA pyrophosphorylase</fullName>
    </alternativeName>
    <alternativeName>
        <fullName evidence="1">Pantetheine-phosphate adenylyltransferase</fullName>
        <shortName evidence="1">PPAT</shortName>
    </alternativeName>
</protein>
<proteinExistence type="inferred from homology"/>
<reference key="1">
    <citation type="journal article" date="2003" name="Nature">
        <title>Genome sequence of Bacillus cereus and comparative analysis with Bacillus anthracis.</title>
        <authorList>
            <person name="Ivanova N."/>
            <person name="Sorokin A."/>
            <person name="Anderson I."/>
            <person name="Galleron N."/>
            <person name="Candelon B."/>
            <person name="Kapatral V."/>
            <person name="Bhattacharyya A."/>
            <person name="Reznik G."/>
            <person name="Mikhailova N."/>
            <person name="Lapidus A."/>
            <person name="Chu L."/>
            <person name="Mazur M."/>
            <person name="Goltsman E."/>
            <person name="Larsen N."/>
            <person name="D'Souza M."/>
            <person name="Walunas T."/>
            <person name="Grechkin Y."/>
            <person name="Pusch G."/>
            <person name="Haselkorn R."/>
            <person name="Fonstein M."/>
            <person name="Ehrlich S.D."/>
            <person name="Overbeek R."/>
            <person name="Kyrpides N.C."/>
        </authorList>
    </citation>
    <scope>NUCLEOTIDE SEQUENCE [LARGE SCALE GENOMIC DNA]</scope>
    <source>
        <strain>ATCC 14579 / DSM 31 / CCUG 7414 / JCM 2152 / NBRC 15305 / NCIMB 9373 / NCTC 2599 / NRRL B-3711</strain>
    </source>
</reference>